<proteinExistence type="evidence at protein level"/>
<gene>
    <name type="primary">rpl13</name>
    <name type="ORF">SPAC664.05</name>
</gene>
<name>RL13_SCHPO</name>
<sequence length="208" mass="23529">MAIHVKGQLPNAHFHKDWQRYVKTWFNQPGRKLRRRQARQTKAAKIAPRPVEAIRPAVKPPTIRYNMKVRAGRGFTLEELKAAGVSRRVASTIGIPVDHRRRNRSEESLQRNVERIKVYLAHLIVFPRKAGQPKKGDATDVSGAEQTDVAAVLPITQEAVEEAKPITEEAKNFNAFSTLSNERAYARYAGARAAFQKKRAEEAEAKKK</sequence>
<keyword id="KW-0002">3D-structure</keyword>
<keyword id="KW-0963">Cytoplasm</keyword>
<keyword id="KW-0597">Phosphoprotein</keyword>
<keyword id="KW-1185">Reference proteome</keyword>
<keyword id="KW-0687">Ribonucleoprotein</keyword>
<keyword id="KW-0689">Ribosomal protein</keyword>
<feature type="chain" id="PRO_0000192936" description="Large ribosomal subunit protein eL13">
    <location>
        <begin position="1"/>
        <end position="208"/>
    </location>
</feature>
<feature type="modified residue" description="Phosphoserine" evidence="3">
    <location>
        <position position="177"/>
    </location>
</feature>
<feature type="modified residue" description="Phosphoserine" evidence="3">
    <location>
        <position position="180"/>
    </location>
</feature>
<feature type="strand" evidence="6">
    <location>
        <begin position="22"/>
        <end position="24"/>
    </location>
</feature>
<feature type="helix" evidence="6">
    <location>
        <begin position="28"/>
        <end position="45"/>
    </location>
</feature>
<feature type="turn" evidence="5">
    <location>
        <begin position="46"/>
        <end position="48"/>
    </location>
</feature>
<feature type="turn" evidence="6">
    <location>
        <begin position="63"/>
        <end position="67"/>
    </location>
</feature>
<feature type="strand" evidence="6">
    <location>
        <begin position="73"/>
        <end position="75"/>
    </location>
</feature>
<feature type="helix" evidence="6">
    <location>
        <begin position="77"/>
        <end position="83"/>
    </location>
</feature>
<feature type="helix" evidence="6">
    <location>
        <begin position="87"/>
        <end position="90"/>
    </location>
</feature>
<feature type="helix" evidence="6">
    <location>
        <begin position="91"/>
        <end position="93"/>
    </location>
</feature>
<feature type="helix" evidence="6">
    <location>
        <begin position="106"/>
        <end position="121"/>
    </location>
</feature>
<feature type="strand" evidence="6">
    <location>
        <begin position="123"/>
        <end position="126"/>
    </location>
</feature>
<feature type="helix" evidence="5">
    <location>
        <begin position="128"/>
        <end position="130"/>
    </location>
</feature>
<feature type="strand" evidence="5">
    <location>
        <begin position="135"/>
        <end position="137"/>
    </location>
</feature>
<feature type="helix" evidence="5">
    <location>
        <begin position="149"/>
        <end position="152"/>
    </location>
</feature>
<feature type="helix" evidence="5">
    <location>
        <begin position="168"/>
        <end position="172"/>
    </location>
</feature>
<feature type="helix" evidence="5">
    <location>
        <begin position="176"/>
        <end position="187"/>
    </location>
</feature>
<feature type="helix" evidence="5">
    <location>
        <begin position="189"/>
        <end position="199"/>
    </location>
</feature>
<evidence type="ECO:0000250" key="1">
    <source>
        <dbReference type="UniProtKB" id="Q12690"/>
    </source>
</evidence>
<evidence type="ECO:0000269" key="2">
    <source>
    </source>
</evidence>
<evidence type="ECO:0000269" key="3">
    <source>
    </source>
</evidence>
<evidence type="ECO:0000305" key="4"/>
<evidence type="ECO:0007829" key="5">
    <source>
        <dbReference type="PDB" id="8ETC"/>
    </source>
</evidence>
<evidence type="ECO:0007829" key="6">
    <source>
        <dbReference type="PDB" id="8EUY"/>
    </source>
</evidence>
<protein>
    <recommendedName>
        <fullName evidence="4">Large ribosomal subunit protein eL13</fullName>
    </recommendedName>
    <alternativeName>
        <fullName>60S ribosomal protein L13</fullName>
    </alternativeName>
</protein>
<comment type="function">
    <text evidence="1">Component of the ribosome, a large ribonucleoprotein complex responsible for the synthesis of proteins in the cell. The small ribosomal subunit (SSU) binds messenger RNAs (mRNAs) and translates the encoded message by selecting cognate aminoacyl-transfer RNA (tRNA) molecules. The large subunit (LSU) contains the ribosomal catalytic site termed the peptidyl transferase center (PTC), which catalyzes the formation of peptide bonds, thereby polymerizing the amino acids delivered by tRNAs into a polypeptide chain. The nascent polypeptides leave the ribosome through a tunnel in the LSU and interact with protein factors that function in enzymatic processing, targeting, and the membrane insertion of nascent chains at the exit of the ribosomal tunnel.</text>
</comment>
<comment type="subunit">
    <text evidence="1">Component of the large ribosomal subunit (LSU). Mature yeast ribosomes consist of a small (40S) and a large (60S) subunit. The 40S small subunit contains 1 molecule of ribosomal RNA (18S rRNA) and at least 33 different proteins. The large 60S subunit contains 3 rRNA molecules (25S, 5.8S and 5S rRNA) and at least 46 different proteins.</text>
</comment>
<comment type="subcellular location">
    <subcellularLocation>
        <location evidence="2">Cytoplasm</location>
    </subcellularLocation>
</comment>
<comment type="similarity">
    <text evidence="4">Belongs to the eukaryotic ribosomal protein eL13 family.</text>
</comment>
<organism>
    <name type="scientific">Schizosaccharomyces pombe (strain 972 / ATCC 24843)</name>
    <name type="common">Fission yeast</name>
    <dbReference type="NCBI Taxonomy" id="284812"/>
    <lineage>
        <taxon>Eukaryota</taxon>
        <taxon>Fungi</taxon>
        <taxon>Dikarya</taxon>
        <taxon>Ascomycota</taxon>
        <taxon>Taphrinomycotina</taxon>
        <taxon>Schizosaccharomycetes</taxon>
        <taxon>Schizosaccharomycetales</taxon>
        <taxon>Schizosaccharomycetaceae</taxon>
        <taxon>Schizosaccharomyces</taxon>
    </lineage>
</organism>
<dbReference type="EMBL" id="AB016216">
    <property type="protein sequence ID" value="BAA31740.1"/>
    <property type="molecule type" value="mRNA"/>
</dbReference>
<dbReference type="EMBL" id="CU329670">
    <property type="protein sequence ID" value="CAB65806.1"/>
    <property type="molecule type" value="Genomic_DNA"/>
</dbReference>
<dbReference type="PIR" id="T43385">
    <property type="entry name" value="T43385"/>
</dbReference>
<dbReference type="RefSeq" id="NP_593453.1">
    <property type="nucleotide sequence ID" value="NM_001018886.2"/>
</dbReference>
<dbReference type="PDB" id="8ESQ">
    <property type="method" value="EM"/>
    <property type="resolution" value="2.80 A"/>
    <property type="chains" value="L=1-208"/>
</dbReference>
<dbReference type="PDB" id="8ESR">
    <property type="method" value="EM"/>
    <property type="resolution" value="3.20 A"/>
    <property type="chains" value="L=1-208"/>
</dbReference>
<dbReference type="PDB" id="8ETC">
    <property type="method" value="EM"/>
    <property type="resolution" value="3.10 A"/>
    <property type="chains" value="L=1-208"/>
</dbReference>
<dbReference type="PDB" id="8ETG">
    <property type="method" value="EM"/>
    <property type="resolution" value="3.40 A"/>
    <property type="chains" value="L=1-208"/>
</dbReference>
<dbReference type="PDB" id="8ETH">
    <property type="method" value="EM"/>
    <property type="resolution" value="3.80 A"/>
    <property type="chains" value="L=1-208"/>
</dbReference>
<dbReference type="PDB" id="8ETI">
    <property type="method" value="EM"/>
    <property type="resolution" value="3.70 A"/>
    <property type="chains" value="L=1-208"/>
</dbReference>
<dbReference type="PDB" id="8ETJ">
    <property type="method" value="EM"/>
    <property type="resolution" value="3.20 A"/>
    <property type="chains" value="L=1-208"/>
</dbReference>
<dbReference type="PDB" id="8EUG">
    <property type="method" value="EM"/>
    <property type="resolution" value="2.80 A"/>
    <property type="chains" value="L=1-208"/>
</dbReference>
<dbReference type="PDB" id="8EUI">
    <property type="method" value="EM"/>
    <property type="resolution" value="3.10 A"/>
    <property type="chains" value="L=1-208"/>
</dbReference>
<dbReference type="PDB" id="8EUP">
    <property type="method" value="EM"/>
    <property type="resolution" value="3.10 A"/>
    <property type="chains" value="L=1-208"/>
</dbReference>
<dbReference type="PDB" id="8EUY">
    <property type="method" value="EM"/>
    <property type="resolution" value="3.00 A"/>
    <property type="chains" value="L=1-208"/>
</dbReference>
<dbReference type="PDB" id="8EV3">
    <property type="method" value="EM"/>
    <property type="resolution" value="3.00 A"/>
    <property type="chains" value="L=1-208"/>
</dbReference>
<dbReference type="PDB" id="9AXT">
    <property type="method" value="EM"/>
    <property type="resolution" value="2.40 A"/>
    <property type="chains" value="BX=1-208"/>
</dbReference>
<dbReference type="PDB" id="9AXU">
    <property type="method" value="EM"/>
    <property type="resolution" value="1.94 A"/>
    <property type="chains" value="X=1-208"/>
</dbReference>
<dbReference type="PDB" id="9AXV">
    <property type="method" value="EM"/>
    <property type="resolution" value="2.40 A"/>
    <property type="chains" value="BX=1-208"/>
</dbReference>
<dbReference type="PDBsum" id="8ESQ"/>
<dbReference type="PDBsum" id="8ESR"/>
<dbReference type="PDBsum" id="8ETC"/>
<dbReference type="PDBsum" id="8ETG"/>
<dbReference type="PDBsum" id="8ETH"/>
<dbReference type="PDBsum" id="8ETI"/>
<dbReference type="PDBsum" id="8ETJ"/>
<dbReference type="PDBsum" id="8EUG"/>
<dbReference type="PDBsum" id="8EUI"/>
<dbReference type="PDBsum" id="8EUP"/>
<dbReference type="PDBsum" id="8EUY"/>
<dbReference type="PDBsum" id="8EV3"/>
<dbReference type="PDBsum" id="9AXT"/>
<dbReference type="PDBsum" id="9AXU"/>
<dbReference type="PDBsum" id="9AXV"/>
<dbReference type="EMDB" id="EMD-43972"/>
<dbReference type="EMDB" id="EMD-43973"/>
<dbReference type="EMDB" id="EMD-43976"/>
<dbReference type="SMR" id="O74175"/>
<dbReference type="BioGRID" id="279970">
    <property type="interactions" value="14"/>
</dbReference>
<dbReference type="FunCoup" id="O74175">
    <property type="interactions" value="527"/>
</dbReference>
<dbReference type="IntAct" id="O74175">
    <property type="interactions" value="2"/>
</dbReference>
<dbReference type="STRING" id="284812.O74175"/>
<dbReference type="iPTMnet" id="O74175"/>
<dbReference type="PaxDb" id="4896-SPAC664.05.1"/>
<dbReference type="EnsemblFungi" id="SPAC664.05.1">
    <property type="protein sequence ID" value="SPAC664.05.1:pep"/>
    <property type="gene ID" value="SPAC664.05"/>
</dbReference>
<dbReference type="GeneID" id="2543553"/>
<dbReference type="KEGG" id="spo:2543553"/>
<dbReference type="PomBase" id="SPAC664.05">
    <property type="gene designation" value="rpl13"/>
</dbReference>
<dbReference type="VEuPathDB" id="FungiDB:SPAC664.05"/>
<dbReference type="eggNOG" id="KOG3295">
    <property type="taxonomic scope" value="Eukaryota"/>
</dbReference>
<dbReference type="HOGENOM" id="CLU_075696_1_0_1"/>
<dbReference type="InParanoid" id="O74175"/>
<dbReference type="OMA" id="HWHKRIK"/>
<dbReference type="PhylomeDB" id="O74175"/>
<dbReference type="Reactome" id="R-SPO-156827">
    <property type="pathway name" value="L13a-mediated translational silencing of Ceruloplasmin expression"/>
</dbReference>
<dbReference type="Reactome" id="R-SPO-1799339">
    <property type="pathway name" value="SRP-dependent cotranslational protein targeting to membrane"/>
</dbReference>
<dbReference type="Reactome" id="R-SPO-72689">
    <property type="pathway name" value="Formation of a pool of free 40S subunits"/>
</dbReference>
<dbReference type="Reactome" id="R-SPO-72706">
    <property type="pathway name" value="GTP hydrolysis and joining of the 60S ribosomal subunit"/>
</dbReference>
<dbReference type="Reactome" id="R-SPO-975956">
    <property type="pathway name" value="Nonsense Mediated Decay (NMD) independent of the Exon Junction Complex (EJC)"/>
</dbReference>
<dbReference type="Reactome" id="R-SPO-975957">
    <property type="pathway name" value="Nonsense Mediated Decay (NMD) enhanced by the Exon Junction Complex (EJC)"/>
</dbReference>
<dbReference type="PRO" id="PR:O74175"/>
<dbReference type="Proteomes" id="UP000002485">
    <property type="component" value="Chromosome I"/>
</dbReference>
<dbReference type="GO" id="GO:0005829">
    <property type="term" value="C:cytosol"/>
    <property type="evidence" value="ECO:0007005"/>
    <property type="project" value="PomBase"/>
</dbReference>
<dbReference type="GO" id="GO:0022625">
    <property type="term" value="C:cytosolic large ribosomal subunit"/>
    <property type="evidence" value="ECO:0000269"/>
    <property type="project" value="PomBase"/>
</dbReference>
<dbReference type="GO" id="GO:0030684">
    <property type="term" value="C:preribosome"/>
    <property type="evidence" value="ECO:0000314"/>
    <property type="project" value="PomBase"/>
</dbReference>
<dbReference type="GO" id="GO:0003723">
    <property type="term" value="F:RNA binding"/>
    <property type="evidence" value="ECO:0000318"/>
    <property type="project" value="GO_Central"/>
</dbReference>
<dbReference type="GO" id="GO:0003735">
    <property type="term" value="F:structural constituent of ribosome"/>
    <property type="evidence" value="ECO:0000318"/>
    <property type="project" value="GO_Central"/>
</dbReference>
<dbReference type="GO" id="GO:0002181">
    <property type="term" value="P:cytoplasmic translation"/>
    <property type="evidence" value="ECO:0000266"/>
    <property type="project" value="PomBase"/>
</dbReference>
<dbReference type="FunFam" id="1.20.5.110:FF:000003">
    <property type="entry name" value="60S ribosomal protein L13"/>
    <property type="match status" value="1"/>
</dbReference>
<dbReference type="Gene3D" id="1.20.5.110">
    <property type="match status" value="1"/>
</dbReference>
<dbReference type="HAMAP" id="MF_00499">
    <property type="entry name" value="Ribosomal_eL13"/>
    <property type="match status" value="1"/>
</dbReference>
<dbReference type="InterPro" id="IPR001380">
    <property type="entry name" value="Ribosomal_eL13"/>
</dbReference>
<dbReference type="InterPro" id="IPR018256">
    <property type="entry name" value="Ribosomal_eL13_CS"/>
</dbReference>
<dbReference type="PANTHER" id="PTHR11722">
    <property type="entry name" value="60S RIBOSOMAL PROTEIN L13"/>
    <property type="match status" value="1"/>
</dbReference>
<dbReference type="PANTHER" id="PTHR11722:SF0">
    <property type="entry name" value="LARGE RIBOSOMAL SUBUNIT PROTEIN EL13"/>
    <property type="match status" value="1"/>
</dbReference>
<dbReference type="Pfam" id="PF01294">
    <property type="entry name" value="Ribosomal_L13e"/>
    <property type="match status" value="1"/>
</dbReference>
<dbReference type="PROSITE" id="PS01104">
    <property type="entry name" value="RIBOSOMAL_L13E"/>
    <property type="match status" value="1"/>
</dbReference>
<reference key="1">
    <citation type="submission" date="1998-07" db="EMBL/GenBank/DDBJ databases">
        <title>S.pombe ribosomal protein L13 homolog.</title>
        <authorList>
            <person name="Kawamukai M."/>
        </authorList>
    </citation>
    <scope>NUCLEOTIDE SEQUENCE [MRNA]</scope>
</reference>
<reference key="2">
    <citation type="journal article" date="2002" name="Nature">
        <title>The genome sequence of Schizosaccharomyces pombe.</title>
        <authorList>
            <person name="Wood V."/>
            <person name="Gwilliam R."/>
            <person name="Rajandream M.A."/>
            <person name="Lyne M.H."/>
            <person name="Lyne R."/>
            <person name="Stewart A."/>
            <person name="Sgouros J.G."/>
            <person name="Peat N."/>
            <person name="Hayles J."/>
            <person name="Baker S.G."/>
            <person name="Basham D."/>
            <person name="Bowman S."/>
            <person name="Brooks K."/>
            <person name="Brown D."/>
            <person name="Brown S."/>
            <person name="Chillingworth T."/>
            <person name="Churcher C.M."/>
            <person name="Collins M."/>
            <person name="Connor R."/>
            <person name="Cronin A."/>
            <person name="Davis P."/>
            <person name="Feltwell T."/>
            <person name="Fraser A."/>
            <person name="Gentles S."/>
            <person name="Goble A."/>
            <person name="Hamlin N."/>
            <person name="Harris D.E."/>
            <person name="Hidalgo J."/>
            <person name="Hodgson G."/>
            <person name="Holroyd S."/>
            <person name="Hornsby T."/>
            <person name="Howarth S."/>
            <person name="Huckle E.J."/>
            <person name="Hunt S."/>
            <person name="Jagels K."/>
            <person name="James K.D."/>
            <person name="Jones L."/>
            <person name="Jones M."/>
            <person name="Leather S."/>
            <person name="McDonald S."/>
            <person name="McLean J."/>
            <person name="Mooney P."/>
            <person name="Moule S."/>
            <person name="Mungall K.L."/>
            <person name="Murphy L.D."/>
            <person name="Niblett D."/>
            <person name="Odell C."/>
            <person name="Oliver K."/>
            <person name="O'Neil S."/>
            <person name="Pearson D."/>
            <person name="Quail M.A."/>
            <person name="Rabbinowitsch E."/>
            <person name="Rutherford K.M."/>
            <person name="Rutter S."/>
            <person name="Saunders D."/>
            <person name="Seeger K."/>
            <person name="Sharp S."/>
            <person name="Skelton J."/>
            <person name="Simmonds M.N."/>
            <person name="Squares R."/>
            <person name="Squares S."/>
            <person name="Stevens K."/>
            <person name="Taylor K."/>
            <person name="Taylor R.G."/>
            <person name="Tivey A."/>
            <person name="Walsh S.V."/>
            <person name="Warren T."/>
            <person name="Whitehead S."/>
            <person name="Woodward J.R."/>
            <person name="Volckaert G."/>
            <person name="Aert R."/>
            <person name="Robben J."/>
            <person name="Grymonprez B."/>
            <person name="Weltjens I."/>
            <person name="Vanstreels E."/>
            <person name="Rieger M."/>
            <person name="Schaefer M."/>
            <person name="Mueller-Auer S."/>
            <person name="Gabel C."/>
            <person name="Fuchs M."/>
            <person name="Duesterhoeft A."/>
            <person name="Fritzc C."/>
            <person name="Holzer E."/>
            <person name="Moestl D."/>
            <person name="Hilbert H."/>
            <person name="Borzym K."/>
            <person name="Langer I."/>
            <person name="Beck A."/>
            <person name="Lehrach H."/>
            <person name="Reinhardt R."/>
            <person name="Pohl T.M."/>
            <person name="Eger P."/>
            <person name="Zimmermann W."/>
            <person name="Wedler H."/>
            <person name="Wambutt R."/>
            <person name="Purnelle B."/>
            <person name="Goffeau A."/>
            <person name="Cadieu E."/>
            <person name="Dreano S."/>
            <person name="Gloux S."/>
            <person name="Lelaure V."/>
            <person name="Mottier S."/>
            <person name="Galibert F."/>
            <person name="Aves S.J."/>
            <person name="Xiang Z."/>
            <person name="Hunt C."/>
            <person name="Moore K."/>
            <person name="Hurst S.M."/>
            <person name="Lucas M."/>
            <person name="Rochet M."/>
            <person name="Gaillardin C."/>
            <person name="Tallada V.A."/>
            <person name="Garzon A."/>
            <person name="Thode G."/>
            <person name="Daga R.R."/>
            <person name="Cruzado L."/>
            <person name="Jimenez J."/>
            <person name="Sanchez M."/>
            <person name="del Rey F."/>
            <person name="Benito J."/>
            <person name="Dominguez A."/>
            <person name="Revuelta J.L."/>
            <person name="Moreno S."/>
            <person name="Armstrong J."/>
            <person name="Forsburg S.L."/>
            <person name="Cerutti L."/>
            <person name="Lowe T."/>
            <person name="McCombie W.R."/>
            <person name="Paulsen I."/>
            <person name="Potashkin J."/>
            <person name="Shpakovski G.V."/>
            <person name="Ussery D."/>
            <person name="Barrell B.G."/>
            <person name="Nurse P."/>
        </authorList>
    </citation>
    <scope>NUCLEOTIDE SEQUENCE [LARGE SCALE GENOMIC DNA]</scope>
    <source>
        <strain>972 / ATCC 24843</strain>
    </source>
</reference>
<reference key="3">
    <citation type="journal article" date="2006" name="Nat. Biotechnol.">
        <title>ORFeome cloning and global analysis of protein localization in the fission yeast Schizosaccharomyces pombe.</title>
        <authorList>
            <person name="Matsuyama A."/>
            <person name="Arai R."/>
            <person name="Yashiroda Y."/>
            <person name="Shirai A."/>
            <person name="Kamata A."/>
            <person name="Sekido S."/>
            <person name="Kobayashi Y."/>
            <person name="Hashimoto A."/>
            <person name="Hamamoto M."/>
            <person name="Hiraoka Y."/>
            <person name="Horinouchi S."/>
            <person name="Yoshida M."/>
        </authorList>
    </citation>
    <scope>SUBCELLULAR LOCATION [LARGE SCALE ANALYSIS]</scope>
</reference>
<reference key="4">
    <citation type="journal article" date="2008" name="J. Proteome Res.">
        <title>Phosphoproteome analysis of fission yeast.</title>
        <authorList>
            <person name="Wilson-Grady J.T."/>
            <person name="Villen J."/>
            <person name="Gygi S.P."/>
        </authorList>
    </citation>
    <scope>PHOSPHORYLATION [LARGE SCALE ANALYSIS] AT SER-177 AND SER-180</scope>
    <scope>IDENTIFICATION BY MASS SPECTROMETRY</scope>
</reference>
<accession>O74175</accession>